<gene>
    <name type="ordered locus">MJ1178</name>
</gene>
<name>Y1178_METJA</name>
<organism>
    <name type="scientific">Methanocaldococcus jannaschii (strain ATCC 43067 / DSM 2661 / JAL-1 / JCM 10045 / NBRC 100440)</name>
    <name type="common">Methanococcus jannaschii</name>
    <dbReference type="NCBI Taxonomy" id="243232"/>
    <lineage>
        <taxon>Archaea</taxon>
        <taxon>Methanobacteriati</taxon>
        <taxon>Methanobacteriota</taxon>
        <taxon>Methanomada group</taxon>
        <taxon>Methanococci</taxon>
        <taxon>Methanococcales</taxon>
        <taxon>Methanocaldococcaceae</taxon>
        <taxon>Methanocaldococcus</taxon>
    </lineage>
</organism>
<accession>Q58577</accession>
<feature type="chain" id="PRO_0000080323" description="Uncharacterized glycosyltransferase MJ1178">
    <location>
        <begin position="1"/>
        <end position="351"/>
    </location>
</feature>
<dbReference type="EC" id="2.4.-.-"/>
<dbReference type="EMBL" id="L77117">
    <property type="protein sequence ID" value="AAB99181.1"/>
    <property type="molecule type" value="Genomic_DNA"/>
</dbReference>
<dbReference type="PIR" id="H64446">
    <property type="entry name" value="H64446"/>
</dbReference>
<dbReference type="SMR" id="Q58577"/>
<dbReference type="FunCoup" id="Q58577">
    <property type="interactions" value="10"/>
</dbReference>
<dbReference type="STRING" id="243232.MJ_1178"/>
<dbReference type="CAZy" id="GT4">
    <property type="family name" value="Glycosyltransferase Family 4"/>
</dbReference>
<dbReference type="PaxDb" id="243232-MJ_1178"/>
<dbReference type="EnsemblBacteria" id="AAB99181">
    <property type="protein sequence ID" value="AAB99181"/>
    <property type="gene ID" value="MJ_1178"/>
</dbReference>
<dbReference type="KEGG" id="mja:MJ_1178"/>
<dbReference type="eggNOG" id="arCOG01403">
    <property type="taxonomic scope" value="Archaea"/>
</dbReference>
<dbReference type="HOGENOM" id="CLU_009583_2_5_2"/>
<dbReference type="InParanoid" id="Q58577"/>
<dbReference type="PhylomeDB" id="Q58577"/>
<dbReference type="Proteomes" id="UP000000805">
    <property type="component" value="Chromosome"/>
</dbReference>
<dbReference type="GO" id="GO:0016757">
    <property type="term" value="F:glycosyltransferase activity"/>
    <property type="evidence" value="ECO:0007669"/>
    <property type="project" value="UniProtKB-KW"/>
</dbReference>
<dbReference type="CDD" id="cd03801">
    <property type="entry name" value="GT4_PimA-like"/>
    <property type="match status" value="1"/>
</dbReference>
<dbReference type="Gene3D" id="3.40.50.2000">
    <property type="entry name" value="Glycogen Phosphorylase B"/>
    <property type="match status" value="2"/>
</dbReference>
<dbReference type="InterPro" id="IPR001296">
    <property type="entry name" value="Glyco_trans_1"/>
</dbReference>
<dbReference type="InterPro" id="IPR028098">
    <property type="entry name" value="Glyco_trans_4-like_N"/>
</dbReference>
<dbReference type="InterPro" id="IPR050194">
    <property type="entry name" value="Glycosyltransferase_grp1"/>
</dbReference>
<dbReference type="PANTHER" id="PTHR45947">
    <property type="entry name" value="SULFOQUINOVOSYL TRANSFERASE SQD2"/>
    <property type="match status" value="1"/>
</dbReference>
<dbReference type="PANTHER" id="PTHR45947:SF3">
    <property type="entry name" value="SULFOQUINOVOSYL TRANSFERASE SQD2"/>
    <property type="match status" value="1"/>
</dbReference>
<dbReference type="Pfam" id="PF13439">
    <property type="entry name" value="Glyco_transf_4"/>
    <property type="match status" value="1"/>
</dbReference>
<dbReference type="Pfam" id="PF00534">
    <property type="entry name" value="Glycos_transf_1"/>
    <property type="match status" value="1"/>
</dbReference>
<dbReference type="SUPFAM" id="SSF53756">
    <property type="entry name" value="UDP-Glycosyltransferase/glycogen phosphorylase"/>
    <property type="match status" value="1"/>
</dbReference>
<protein>
    <recommendedName>
        <fullName>Uncharacterized glycosyltransferase MJ1178</fullName>
        <ecNumber>2.4.-.-</ecNumber>
    </recommendedName>
</protein>
<evidence type="ECO:0000305" key="1"/>
<sequence>MIIMKVLMPSIYYPYIGGITLHVENLVKRLKDIEFHILTYDSYEENEYKNVIIHNVPHLKKFRGISYLINAYKIGKNIIESEGIDLIHSHYAFPQGCVGALLKNKLSIPHILTLHGSDALILKNSIKGRYFFKYATTNSDKIICVSKYIKNQLDENLKNRAIVIYNGVNKEILYNEGDYNFGLFVGAFVPQKGVDILIDAIKDIDFNFKLIGDGKLYKKIENFVVKNNLSHIELLGRKSFDEVASFMRKCSFLVVPSRSEGFGMVAVEGMACSKPVIATRVGGLGEIVIDGYNGLLAEKNNPNDLKEKILELINNEELRKTLGENGKEFSKKFSWEKCVMGVRKVYEELSD</sequence>
<reference key="1">
    <citation type="journal article" date="1996" name="Science">
        <title>Complete genome sequence of the methanogenic archaeon, Methanococcus jannaschii.</title>
        <authorList>
            <person name="Bult C.J."/>
            <person name="White O."/>
            <person name="Olsen G.J."/>
            <person name="Zhou L."/>
            <person name="Fleischmann R.D."/>
            <person name="Sutton G.G."/>
            <person name="Blake J.A."/>
            <person name="FitzGerald L.M."/>
            <person name="Clayton R.A."/>
            <person name="Gocayne J.D."/>
            <person name="Kerlavage A.R."/>
            <person name="Dougherty B.A."/>
            <person name="Tomb J.-F."/>
            <person name="Adams M.D."/>
            <person name="Reich C.I."/>
            <person name="Overbeek R."/>
            <person name="Kirkness E.F."/>
            <person name="Weinstock K.G."/>
            <person name="Merrick J.M."/>
            <person name="Glodek A."/>
            <person name="Scott J.L."/>
            <person name="Geoghagen N.S.M."/>
            <person name="Weidman J.F."/>
            <person name="Fuhrmann J.L."/>
            <person name="Nguyen D."/>
            <person name="Utterback T.R."/>
            <person name="Kelley J.M."/>
            <person name="Peterson J.D."/>
            <person name="Sadow P.W."/>
            <person name="Hanna M.C."/>
            <person name="Cotton M.D."/>
            <person name="Roberts K.M."/>
            <person name="Hurst M.A."/>
            <person name="Kaine B.P."/>
            <person name="Borodovsky M."/>
            <person name="Klenk H.-P."/>
            <person name="Fraser C.M."/>
            <person name="Smith H.O."/>
            <person name="Woese C.R."/>
            <person name="Venter J.C."/>
        </authorList>
    </citation>
    <scope>NUCLEOTIDE SEQUENCE [LARGE SCALE GENOMIC DNA]</scope>
    <source>
        <strain>ATCC 43067 / DSM 2661 / JAL-1 / JCM 10045 / NBRC 100440</strain>
    </source>
</reference>
<comment type="similarity">
    <text evidence="1">Belongs to the glycosyltransferase group 1 family. Glycosyltransferase 4 subfamily.</text>
</comment>
<proteinExistence type="inferred from homology"/>
<keyword id="KW-0328">Glycosyltransferase</keyword>
<keyword id="KW-1185">Reference proteome</keyword>
<keyword id="KW-0808">Transferase</keyword>